<dbReference type="EC" id="2.7.13.3"/>
<dbReference type="EMBL" id="X82645">
    <property type="protein sequence ID" value="CAA57970.1"/>
    <property type="molecule type" value="Genomic_DNA"/>
</dbReference>
<dbReference type="EMBL" id="AM774415">
    <property type="protein sequence ID" value="CAP13664.1"/>
    <property type="molecule type" value="Genomic_DNA"/>
</dbReference>
<dbReference type="PIR" id="S54304">
    <property type="entry name" value="S54304"/>
</dbReference>
<dbReference type="RefSeq" id="WP_010902690.1">
    <property type="nucleotide sequence ID" value="NC_010364.1"/>
</dbReference>
<dbReference type="SMR" id="B0R4J9"/>
<dbReference type="EnsemblBacteria" id="CAP13664">
    <property type="protein sequence ID" value="CAP13664"/>
    <property type="gene ID" value="OE_2415R"/>
</dbReference>
<dbReference type="GeneID" id="68693776"/>
<dbReference type="KEGG" id="hsl:OE_2415R"/>
<dbReference type="HOGENOM" id="CLU_000650_3_6_2"/>
<dbReference type="PhylomeDB" id="B0R4J9"/>
<dbReference type="Proteomes" id="UP000001321">
    <property type="component" value="Chromosome"/>
</dbReference>
<dbReference type="GO" id="GO:0005737">
    <property type="term" value="C:cytoplasm"/>
    <property type="evidence" value="ECO:0007669"/>
    <property type="project" value="InterPro"/>
</dbReference>
<dbReference type="GO" id="GO:0005524">
    <property type="term" value="F:ATP binding"/>
    <property type="evidence" value="ECO:0007669"/>
    <property type="project" value="UniProtKB-KW"/>
</dbReference>
<dbReference type="GO" id="GO:0000155">
    <property type="term" value="F:phosphorelay sensor kinase activity"/>
    <property type="evidence" value="ECO:0007669"/>
    <property type="project" value="InterPro"/>
</dbReference>
<dbReference type="GO" id="GO:0006935">
    <property type="term" value="P:chemotaxis"/>
    <property type="evidence" value="ECO:0007669"/>
    <property type="project" value="UniProtKB-KW"/>
</dbReference>
<dbReference type="CDD" id="cd00731">
    <property type="entry name" value="CheA_reg"/>
    <property type="match status" value="1"/>
</dbReference>
<dbReference type="CDD" id="cd16916">
    <property type="entry name" value="HATPase_CheA-like"/>
    <property type="match status" value="1"/>
</dbReference>
<dbReference type="CDD" id="cd00088">
    <property type="entry name" value="HPT"/>
    <property type="match status" value="1"/>
</dbReference>
<dbReference type="FunFam" id="3.30.565.10:FF:000016">
    <property type="entry name" value="Chemotaxis protein CheA, putative"/>
    <property type="match status" value="1"/>
</dbReference>
<dbReference type="Gene3D" id="1.10.287.560">
    <property type="entry name" value="Histidine kinase CheA-like, homodimeric domain"/>
    <property type="match status" value="1"/>
</dbReference>
<dbReference type="Gene3D" id="3.30.70.1110">
    <property type="entry name" value="Histidine kinase CheA-like, P2 response regulator-binding domain"/>
    <property type="match status" value="1"/>
</dbReference>
<dbReference type="Gene3D" id="3.30.565.10">
    <property type="entry name" value="Histidine kinase-like ATPase, C-terminal domain"/>
    <property type="match status" value="1"/>
</dbReference>
<dbReference type="Gene3D" id="1.20.120.160">
    <property type="entry name" value="HPT domain"/>
    <property type="match status" value="1"/>
</dbReference>
<dbReference type="Gene3D" id="2.30.30.40">
    <property type="entry name" value="SH3 Domains"/>
    <property type="match status" value="1"/>
</dbReference>
<dbReference type="InterPro" id="IPR051315">
    <property type="entry name" value="Bact_Chemotaxis_CheA"/>
</dbReference>
<dbReference type="InterPro" id="IPR004105">
    <property type="entry name" value="CheA-like_dim"/>
</dbReference>
<dbReference type="InterPro" id="IPR037006">
    <property type="entry name" value="CheA-like_homodim_sf"/>
</dbReference>
<dbReference type="InterPro" id="IPR037052">
    <property type="entry name" value="CheA-like_P2_sf"/>
</dbReference>
<dbReference type="InterPro" id="IPR010808">
    <property type="entry name" value="CheA_P2-bd"/>
</dbReference>
<dbReference type="InterPro" id="IPR053588">
    <property type="entry name" value="CheA_signal_transducer"/>
</dbReference>
<dbReference type="InterPro" id="IPR036061">
    <property type="entry name" value="CheW-like_dom_sf"/>
</dbReference>
<dbReference type="InterPro" id="IPR002545">
    <property type="entry name" value="CheW-lke_dom"/>
</dbReference>
<dbReference type="InterPro" id="IPR036890">
    <property type="entry name" value="HATPase_C_sf"/>
</dbReference>
<dbReference type="InterPro" id="IPR005467">
    <property type="entry name" value="His_kinase_dom"/>
</dbReference>
<dbReference type="InterPro" id="IPR036097">
    <property type="entry name" value="HisK_dim/P_sf"/>
</dbReference>
<dbReference type="InterPro" id="IPR036641">
    <property type="entry name" value="HPT_dom_sf"/>
</dbReference>
<dbReference type="InterPro" id="IPR004358">
    <property type="entry name" value="Sig_transdc_His_kin-like_C"/>
</dbReference>
<dbReference type="InterPro" id="IPR008207">
    <property type="entry name" value="Sig_transdc_His_kin_Hpt_dom"/>
</dbReference>
<dbReference type="NCBIfam" id="NF041336">
    <property type="entry name" value="CheA_Halo"/>
    <property type="match status" value="1"/>
</dbReference>
<dbReference type="PANTHER" id="PTHR43395:SF10">
    <property type="entry name" value="CHEMOTAXIS PROTEIN CHEA"/>
    <property type="match status" value="1"/>
</dbReference>
<dbReference type="PANTHER" id="PTHR43395">
    <property type="entry name" value="SENSOR HISTIDINE KINASE CHEA"/>
    <property type="match status" value="1"/>
</dbReference>
<dbReference type="Pfam" id="PF01584">
    <property type="entry name" value="CheW"/>
    <property type="match status" value="1"/>
</dbReference>
<dbReference type="Pfam" id="PF02895">
    <property type="entry name" value="H-kinase_dim"/>
    <property type="match status" value="1"/>
</dbReference>
<dbReference type="Pfam" id="PF02518">
    <property type="entry name" value="HATPase_c"/>
    <property type="match status" value="1"/>
</dbReference>
<dbReference type="Pfam" id="PF01627">
    <property type="entry name" value="Hpt"/>
    <property type="match status" value="1"/>
</dbReference>
<dbReference type="Pfam" id="PF07194">
    <property type="entry name" value="P2"/>
    <property type="match status" value="1"/>
</dbReference>
<dbReference type="PRINTS" id="PR00344">
    <property type="entry name" value="BCTRLSENSOR"/>
</dbReference>
<dbReference type="SMART" id="SM00260">
    <property type="entry name" value="CheW"/>
    <property type="match status" value="1"/>
</dbReference>
<dbReference type="SMART" id="SM01231">
    <property type="entry name" value="H-kinase_dim"/>
    <property type="match status" value="1"/>
</dbReference>
<dbReference type="SMART" id="SM00387">
    <property type="entry name" value="HATPase_c"/>
    <property type="match status" value="1"/>
</dbReference>
<dbReference type="SMART" id="SM00073">
    <property type="entry name" value="HPT"/>
    <property type="match status" value="1"/>
</dbReference>
<dbReference type="SUPFAM" id="SSF55874">
    <property type="entry name" value="ATPase domain of HSP90 chaperone/DNA topoisomerase II/histidine kinase"/>
    <property type="match status" value="1"/>
</dbReference>
<dbReference type="SUPFAM" id="SSF50341">
    <property type="entry name" value="CheW-like"/>
    <property type="match status" value="1"/>
</dbReference>
<dbReference type="SUPFAM" id="SSF47226">
    <property type="entry name" value="Histidine-containing phosphotransfer domain, HPT domain"/>
    <property type="match status" value="1"/>
</dbReference>
<dbReference type="SUPFAM" id="SSF47384">
    <property type="entry name" value="Homodimeric domain of signal transducing histidine kinase"/>
    <property type="match status" value="1"/>
</dbReference>
<dbReference type="PROSITE" id="PS50851">
    <property type="entry name" value="CHEW"/>
    <property type="match status" value="1"/>
</dbReference>
<dbReference type="PROSITE" id="PS50109">
    <property type="entry name" value="HIS_KIN"/>
    <property type="match status" value="1"/>
</dbReference>
<dbReference type="PROSITE" id="PS50894">
    <property type="entry name" value="HPT"/>
    <property type="match status" value="1"/>
</dbReference>
<name>CHEA_HALS3</name>
<comment type="function">
    <text evidence="6 7">Involved in the transmission of sensory signals from the chemoreceptors and photoreceptors to the flagellar motors. Autophosphorylates, probably in response to a chemo- or phototactic signal, and transfers its phosphate group to CheY. Could also transfer its phosphate group to CheB.</text>
</comment>
<comment type="catalytic activity">
    <reaction evidence="6">
        <text>ATP + protein L-histidine = ADP + protein N-phospho-L-histidine.</text>
        <dbReference type="EC" id="2.7.13.3"/>
    </reaction>
</comment>
<comment type="subunit">
    <text evidence="5">Interacts with CheW1, CheY, and several transducer proteins (HTR-I, HTR-II, BasT, CosT, MpcT, Htr4, Htr6, HtrVIII, Htr16 and Htr17).</text>
</comment>
<comment type="PTM">
    <text>Autophosphorylated.</text>
</comment>
<comment type="disruption phenotype">
    <text evidence="7 8">Deletion leads to the loss of both chemotactic and phototactic responses.</text>
</comment>
<feature type="chain" id="PRO_0000429066" description="Chemotaxis protein CheA">
    <location>
        <begin position="1"/>
        <end position="668"/>
    </location>
</feature>
<feature type="domain" description="HPt" evidence="3">
    <location>
        <begin position="1"/>
        <end position="101"/>
    </location>
</feature>
<feature type="domain" description="Histidine kinase" evidence="2">
    <location>
        <begin position="330"/>
        <end position="541"/>
    </location>
</feature>
<feature type="domain" description="CheW-like" evidence="1">
    <location>
        <begin position="543"/>
        <end position="668"/>
    </location>
</feature>
<feature type="region of interest" description="Disordered" evidence="4">
    <location>
        <begin position="123"/>
        <end position="149"/>
    </location>
</feature>
<feature type="region of interest" description="Disordered" evidence="4">
    <location>
        <begin position="243"/>
        <end position="291"/>
    </location>
</feature>
<feature type="compositionally biased region" description="Low complexity" evidence="4">
    <location>
        <begin position="133"/>
        <end position="146"/>
    </location>
</feature>
<feature type="compositionally biased region" description="Acidic residues" evidence="4">
    <location>
        <begin position="256"/>
        <end position="270"/>
    </location>
</feature>
<feature type="compositionally biased region" description="Low complexity" evidence="4">
    <location>
        <begin position="271"/>
        <end position="286"/>
    </location>
</feature>
<feature type="modified residue" description="Phosphohistidine; by autocatalysis" evidence="9">
    <location>
        <position position="44"/>
    </location>
</feature>
<feature type="mutagenesis site" description="Lack of phosphorylation." evidence="6">
    <original>H</original>
    <variation>Q</variation>
    <location>
        <position position="44"/>
    </location>
</feature>
<feature type="sequence conflict" description="In Ref. 1; CAA57970." evidence="9" ref="1">
    <original>D</original>
    <variation>H</variation>
    <location>
        <position position="128"/>
    </location>
</feature>
<feature type="sequence conflict" description="In Ref. 1; CAA57970." evidence="9" ref="1">
    <original>A</original>
    <variation>V</variation>
    <location>
        <position position="163"/>
    </location>
</feature>
<proteinExistence type="evidence at protein level"/>
<sequence>MDDYLEAFVREGEEHVTSLNNALLELESDPGNEEAMDEIFRTAHTLKGNFGAMGFEDASDLAHAVEDLLDEMRQGNLEVTSDRMDRIFEGIDGIEACLDEIQATGDVDRDVTGTIESVRAVLDEVDGDGGSGTTTSSGDAGSPAGDGDVDATRVVDADTIDAAEDPVYHIHIDMGDSQMKGVDGMFVLEEATEAFDLLGAEPSPDAINDGEYGDGFELVVATPSDEVSDTVAAFPKLSDATVTAVGDDEHAPDADSGTEADASADDDADDAGTTADSGSSSGGSSAIDNTDTEIQSVRVDVDQLDELHGLVEQLVTTRIKLRRGMEESDREVLDELDELDKITSSLQDTVMDMRLVPMKKIVGKFPRLVRDLAREQDKDIDFVVEGDDVELDRTILTEISDPLMHLLRNAVDHGIEKPAVREDNGKDREGTITLSAERDRDHVLIQVRDDGAGIDHDTMREKAIEKGVKTREEVQDMPDDDVEDLVFHPGFSTNDEVTDVSGRGVGMDVVRDTVTRLDGSVSVDSTPGEGTTFTMTLPVTVAIVKVLFVESGGEEYGIPIKTVDEISRMKSVKSVDGEEVITYDETVYPLVRLGDALNVPDETRNGDGMLVRIRDSERQVAVHCDDVRGQEEVVVKPFEGILSGIPGLSGAAVLGEGDVVTILDVATL</sequence>
<organism>
    <name type="scientific">Halobacterium salinarum (strain ATCC 29341 / DSM 671 / R1)</name>
    <dbReference type="NCBI Taxonomy" id="478009"/>
    <lineage>
        <taxon>Archaea</taxon>
        <taxon>Methanobacteriati</taxon>
        <taxon>Methanobacteriota</taxon>
        <taxon>Stenosarchaea group</taxon>
        <taxon>Halobacteria</taxon>
        <taxon>Halobacteriales</taxon>
        <taxon>Halobacteriaceae</taxon>
        <taxon>Halobacterium</taxon>
        <taxon>Halobacterium salinarum NRC-34001</taxon>
    </lineage>
</organism>
<evidence type="ECO:0000255" key="1">
    <source>
        <dbReference type="PROSITE-ProRule" id="PRU00052"/>
    </source>
</evidence>
<evidence type="ECO:0000255" key="2">
    <source>
        <dbReference type="PROSITE-ProRule" id="PRU00107"/>
    </source>
</evidence>
<evidence type="ECO:0000255" key="3">
    <source>
        <dbReference type="PROSITE-ProRule" id="PRU00110"/>
    </source>
</evidence>
<evidence type="ECO:0000256" key="4">
    <source>
        <dbReference type="SAM" id="MobiDB-lite"/>
    </source>
</evidence>
<evidence type="ECO:0000269" key="5">
    <source>
    </source>
</evidence>
<evidence type="ECO:0000269" key="6">
    <source>
    </source>
</evidence>
<evidence type="ECO:0000269" key="7">
    <source>
    </source>
</evidence>
<evidence type="ECO:0000269" key="8">
    <source>
    </source>
</evidence>
<evidence type="ECO:0000305" key="9"/>
<reference key="1">
    <citation type="journal article" date="1995" name="EMBO J.">
        <title>Chemotaxis and phototaxis require a CheA histidine kinase in the archaeon Halobacterium salinarium.</title>
        <authorList>
            <person name="Rudolph J."/>
            <person name="Oesterhelt D."/>
        </authorList>
    </citation>
    <scope>NUCLEOTIDE SEQUENCE [GENOMIC DNA]</scope>
    <scope>PROTEIN SEQUENCE OF 1-5</scope>
    <scope>FUNCTION</scope>
    <scope>DISRUPTION PHENOTYPE</scope>
    <source>
        <strain>R1 / S9</strain>
    </source>
</reference>
<reference key="2">
    <citation type="journal article" date="2008" name="Genomics">
        <title>Evolution in the laboratory: the genome of Halobacterium salinarum strain R1 compared to that of strain NRC-1.</title>
        <authorList>
            <person name="Pfeiffer F."/>
            <person name="Schuster S.C."/>
            <person name="Broicher A."/>
            <person name="Falb M."/>
            <person name="Palm P."/>
            <person name="Rodewald K."/>
            <person name="Ruepp A."/>
            <person name="Soppa J."/>
            <person name="Tittor J."/>
            <person name="Oesterhelt D."/>
        </authorList>
    </citation>
    <scope>NUCLEOTIDE SEQUENCE [LARGE SCALE GENOMIC DNA]</scope>
    <source>
        <strain>ATCC 29341 / DSM 671 / R1</strain>
    </source>
</reference>
<reference key="3">
    <citation type="journal article" date="1995" name="EMBO J.">
        <title>Phosphorylation in halobacterial signal transduction.</title>
        <authorList>
            <person name="Rudolph J."/>
            <person name="Tolliday N."/>
            <person name="Schmitt C."/>
            <person name="Schuster S.C."/>
            <person name="Oesterhelt D."/>
        </authorList>
    </citation>
    <scope>FUNCTION</scope>
    <scope>CATALYTIC ACTIVITY</scope>
    <scope>AUTOPHOSPHORYLATION</scope>
    <scope>MUTAGENESIS OF HIS-44</scope>
    <source>
        <strain>R1 / S9 / D2</strain>
    </source>
</reference>
<reference key="4">
    <citation type="journal article" date="1996" name="J. Mol. Biol.">
        <title>Deletion analysis of the che operon in the archaeon Halobacterium salinarium.</title>
        <authorList>
            <person name="Rudolph J."/>
            <person name="Oesterhelt D."/>
        </authorList>
    </citation>
    <scope>DISRUPTION PHENOTYPE</scope>
</reference>
<reference key="5">
    <citation type="journal article" date="2012" name="BMC Microbiol.">
        <title>The protein interaction network of a taxis signal transduction system in a halophilic archaeon.</title>
        <authorList>
            <person name="Schlesner M."/>
            <person name="Miller A."/>
            <person name="Besir H."/>
            <person name="Aivaliotis M."/>
            <person name="Streif J."/>
            <person name="Scheffer B."/>
            <person name="Siedler F."/>
            <person name="Oesterhelt D."/>
        </authorList>
    </citation>
    <scope>INTERACTION WITH CHEW1; CHEY AND TRANSDUCER PROTEINS</scope>
    <source>
        <strain>ATCC 29341 / DSM 671 / R1</strain>
    </source>
</reference>
<protein>
    <recommendedName>
        <fullName>Chemotaxis protein CheA</fullName>
        <ecNumber>2.7.13.3</ecNumber>
    </recommendedName>
</protein>
<accession>B0R4J9</accession>
<accession>Q48297</accession>
<gene>
    <name type="primary">cheA</name>
    <name type="ordered locus">OE_2415R</name>
</gene>
<keyword id="KW-0067">ATP-binding</keyword>
<keyword id="KW-0145">Chemotaxis</keyword>
<keyword id="KW-0903">Direct protein sequencing</keyword>
<keyword id="KW-0418">Kinase</keyword>
<keyword id="KW-0547">Nucleotide-binding</keyword>
<keyword id="KW-0597">Phosphoprotein</keyword>
<keyword id="KW-0808">Transferase</keyword>
<keyword id="KW-0902">Two-component regulatory system</keyword>